<protein>
    <recommendedName>
        <fullName>Cytochrome c-554(547)</fullName>
        <shortName>Cytochrome c554</shortName>
    </recommendedName>
</protein>
<sequence length="91" mass="9226">AGDAAAGKTLYDASCASCHGMQAQGQGMFPKLAGLTSERIKTTLVAFKSGDTATLKKEGLGGPMSAIMAPNAAGLSEQDMDNLSAYIATLK</sequence>
<reference key="1">
    <citation type="journal article" date="1985" name="Biochem. J.">
        <title>The amino acid sequence of the cytochrome c-554(547) from the chemolithotrophic bacterium Thiobacillus neapolitanus.</title>
        <authorList>
            <person name="Ambler R.P."/>
            <person name="Meyer T.E."/>
            <person name="Trudinger P.A."/>
            <person name="Kamens M.D."/>
        </authorList>
    </citation>
    <scope>PROTEIN SEQUENCE</scope>
    <source>
        <strain>DSM 15147 / CIP 104769 / NCIMB 8539 / c2 / X</strain>
    </source>
</reference>
<comment type="subunit">
    <text>Monomer.</text>
</comment>
<comment type="PTM">
    <text>Binds 1 heme c group covalently per subunit.</text>
</comment>
<feature type="chain" id="PRO_0000108407" description="Cytochrome c-554(547)">
    <location>
        <begin position="1"/>
        <end position="91"/>
    </location>
</feature>
<feature type="binding site" description="covalent">
    <location>
        <position position="15"/>
    </location>
    <ligand>
        <name>heme c</name>
        <dbReference type="ChEBI" id="CHEBI:61717"/>
    </ligand>
</feature>
<feature type="binding site" description="covalent">
    <location>
        <position position="18"/>
    </location>
    <ligand>
        <name>heme c</name>
        <dbReference type="ChEBI" id="CHEBI:61717"/>
    </ligand>
</feature>
<feature type="binding site" description="axial binding residue">
    <location>
        <position position="19"/>
    </location>
    <ligand>
        <name>heme c</name>
        <dbReference type="ChEBI" id="CHEBI:61717"/>
    </ligand>
    <ligandPart>
        <name>Fe</name>
        <dbReference type="ChEBI" id="CHEBI:18248"/>
    </ligandPart>
</feature>
<feature type="binding site" description="axial binding residue">
    <location>
        <position position="64"/>
    </location>
    <ligand>
        <name>heme c</name>
        <dbReference type="ChEBI" id="CHEBI:61717"/>
    </ligand>
    <ligandPart>
        <name>Fe</name>
        <dbReference type="ChEBI" id="CHEBI:18248"/>
    </ligandPart>
</feature>
<organism>
    <name type="scientific">Halothiobacillus neapolitanus</name>
    <name type="common">Thiobacillus neapolitanus</name>
    <dbReference type="NCBI Taxonomy" id="927"/>
    <lineage>
        <taxon>Bacteria</taxon>
        <taxon>Pseudomonadati</taxon>
        <taxon>Pseudomonadota</taxon>
        <taxon>Gammaproteobacteria</taxon>
        <taxon>Chromatiales</taxon>
        <taxon>Halothiobacillaceae</taxon>
        <taxon>Halothiobacillus</taxon>
    </lineage>
</organism>
<name>C554_HALNE</name>
<accession>P25938</accession>
<proteinExistence type="evidence at protein level"/>
<keyword id="KW-0903">Direct protein sequencing</keyword>
<keyword id="KW-0249">Electron transport</keyword>
<keyword id="KW-0349">Heme</keyword>
<keyword id="KW-0408">Iron</keyword>
<keyword id="KW-0479">Metal-binding</keyword>
<keyword id="KW-0813">Transport</keyword>
<dbReference type="SMR" id="P25938"/>
<dbReference type="GO" id="GO:0009055">
    <property type="term" value="F:electron transfer activity"/>
    <property type="evidence" value="ECO:0007669"/>
    <property type="project" value="InterPro"/>
</dbReference>
<dbReference type="GO" id="GO:0020037">
    <property type="term" value="F:heme binding"/>
    <property type="evidence" value="ECO:0007669"/>
    <property type="project" value="InterPro"/>
</dbReference>
<dbReference type="GO" id="GO:0046872">
    <property type="term" value="F:metal ion binding"/>
    <property type="evidence" value="ECO:0007669"/>
    <property type="project" value="UniProtKB-KW"/>
</dbReference>
<dbReference type="Gene3D" id="1.10.760.10">
    <property type="entry name" value="Cytochrome c-like domain"/>
    <property type="match status" value="1"/>
</dbReference>
<dbReference type="InterPro" id="IPR009056">
    <property type="entry name" value="Cyt_c-like_dom"/>
</dbReference>
<dbReference type="InterPro" id="IPR036909">
    <property type="entry name" value="Cyt_c-like_dom_sf"/>
</dbReference>
<dbReference type="InterPro" id="IPR050597">
    <property type="entry name" value="Cytochrome_c_Oxidase_Subunit"/>
</dbReference>
<dbReference type="PANTHER" id="PTHR33751">
    <property type="entry name" value="CBB3-TYPE CYTOCHROME C OXIDASE SUBUNIT FIXP"/>
    <property type="match status" value="1"/>
</dbReference>
<dbReference type="PANTHER" id="PTHR33751:SF9">
    <property type="entry name" value="CYTOCHROME C4"/>
    <property type="match status" value="1"/>
</dbReference>
<dbReference type="Pfam" id="PF00034">
    <property type="entry name" value="Cytochrom_C"/>
    <property type="match status" value="1"/>
</dbReference>
<dbReference type="SUPFAM" id="SSF46626">
    <property type="entry name" value="Cytochrome c"/>
    <property type="match status" value="1"/>
</dbReference>
<dbReference type="PROSITE" id="PS51007">
    <property type="entry name" value="CYTC"/>
    <property type="match status" value="1"/>
</dbReference>